<dbReference type="EC" id="2.7.1.48" evidence="1"/>
<dbReference type="EMBL" id="CP000436">
    <property type="protein sequence ID" value="ABI24921.1"/>
    <property type="molecule type" value="Genomic_DNA"/>
</dbReference>
<dbReference type="SMR" id="Q0I2Y9"/>
<dbReference type="KEGG" id="hso:HS_0644"/>
<dbReference type="eggNOG" id="COG0572">
    <property type="taxonomic scope" value="Bacteria"/>
</dbReference>
<dbReference type="HOGENOM" id="CLU_021278_1_2_6"/>
<dbReference type="UniPathway" id="UPA00574">
    <property type="reaction ID" value="UER00637"/>
</dbReference>
<dbReference type="UniPathway" id="UPA00579">
    <property type="reaction ID" value="UER00640"/>
</dbReference>
<dbReference type="GO" id="GO:0005737">
    <property type="term" value="C:cytoplasm"/>
    <property type="evidence" value="ECO:0007669"/>
    <property type="project" value="UniProtKB-SubCell"/>
</dbReference>
<dbReference type="GO" id="GO:0005524">
    <property type="term" value="F:ATP binding"/>
    <property type="evidence" value="ECO:0007669"/>
    <property type="project" value="UniProtKB-UniRule"/>
</dbReference>
<dbReference type="GO" id="GO:0043771">
    <property type="term" value="F:cytidine kinase activity"/>
    <property type="evidence" value="ECO:0007669"/>
    <property type="project" value="RHEA"/>
</dbReference>
<dbReference type="GO" id="GO:0004849">
    <property type="term" value="F:uridine kinase activity"/>
    <property type="evidence" value="ECO:0007669"/>
    <property type="project" value="UniProtKB-UniRule"/>
</dbReference>
<dbReference type="GO" id="GO:0044211">
    <property type="term" value="P:CTP salvage"/>
    <property type="evidence" value="ECO:0007669"/>
    <property type="project" value="UniProtKB-UniRule"/>
</dbReference>
<dbReference type="GO" id="GO:0044206">
    <property type="term" value="P:UMP salvage"/>
    <property type="evidence" value="ECO:0007669"/>
    <property type="project" value="UniProtKB-UniRule"/>
</dbReference>
<dbReference type="CDD" id="cd02023">
    <property type="entry name" value="UMPK"/>
    <property type="match status" value="1"/>
</dbReference>
<dbReference type="Gene3D" id="3.40.50.300">
    <property type="entry name" value="P-loop containing nucleotide triphosphate hydrolases"/>
    <property type="match status" value="1"/>
</dbReference>
<dbReference type="HAMAP" id="MF_00551">
    <property type="entry name" value="Uridine_kinase"/>
    <property type="match status" value="1"/>
</dbReference>
<dbReference type="InterPro" id="IPR027417">
    <property type="entry name" value="P-loop_NTPase"/>
</dbReference>
<dbReference type="InterPro" id="IPR006083">
    <property type="entry name" value="PRK/URK"/>
</dbReference>
<dbReference type="InterPro" id="IPR026008">
    <property type="entry name" value="Uridine_kinase"/>
</dbReference>
<dbReference type="InterPro" id="IPR000764">
    <property type="entry name" value="Uridine_kinase-like"/>
</dbReference>
<dbReference type="NCBIfam" id="NF004018">
    <property type="entry name" value="PRK05480.1"/>
    <property type="match status" value="1"/>
</dbReference>
<dbReference type="NCBIfam" id="TIGR00235">
    <property type="entry name" value="udk"/>
    <property type="match status" value="1"/>
</dbReference>
<dbReference type="PANTHER" id="PTHR10285">
    <property type="entry name" value="URIDINE KINASE"/>
    <property type="match status" value="1"/>
</dbReference>
<dbReference type="Pfam" id="PF00485">
    <property type="entry name" value="PRK"/>
    <property type="match status" value="1"/>
</dbReference>
<dbReference type="PRINTS" id="PR00988">
    <property type="entry name" value="URIDINKINASE"/>
</dbReference>
<dbReference type="SUPFAM" id="SSF52540">
    <property type="entry name" value="P-loop containing nucleoside triphosphate hydrolases"/>
    <property type="match status" value="1"/>
</dbReference>
<sequence>MSDQSCIIIAIAGASASGKSLIASTIHEELCNELGCEEIGIVTEDSYYKDQTHLSFEERIKTNYDHPNSMDRDLLIQHLCDLKKGKAVDIPVYSYVEHTRTQEVTRFEPKKVIILEGILLLTDERIRQEVNMSVFVDTPLDICFIRRLQRDMEERGRSLQSVIDQYKSTVRPMFLQFIEPSKQYADIVVPRGGKNRVAINMLKVQIQHLLNNK</sequence>
<keyword id="KW-0067">ATP-binding</keyword>
<keyword id="KW-0963">Cytoplasm</keyword>
<keyword id="KW-0418">Kinase</keyword>
<keyword id="KW-0547">Nucleotide-binding</keyword>
<keyword id="KW-0808">Transferase</keyword>
<protein>
    <recommendedName>
        <fullName evidence="1">Uridine kinase</fullName>
        <ecNumber evidence="1">2.7.1.48</ecNumber>
    </recommendedName>
    <alternativeName>
        <fullName evidence="1">Cytidine monophosphokinase</fullName>
    </alternativeName>
    <alternativeName>
        <fullName evidence="1">Uridine monophosphokinase</fullName>
    </alternativeName>
</protein>
<comment type="catalytic activity">
    <reaction evidence="1">
        <text>uridine + ATP = UMP + ADP + H(+)</text>
        <dbReference type="Rhea" id="RHEA:16825"/>
        <dbReference type="ChEBI" id="CHEBI:15378"/>
        <dbReference type="ChEBI" id="CHEBI:16704"/>
        <dbReference type="ChEBI" id="CHEBI:30616"/>
        <dbReference type="ChEBI" id="CHEBI:57865"/>
        <dbReference type="ChEBI" id="CHEBI:456216"/>
        <dbReference type="EC" id="2.7.1.48"/>
    </reaction>
</comment>
<comment type="catalytic activity">
    <reaction evidence="1">
        <text>cytidine + ATP = CMP + ADP + H(+)</text>
        <dbReference type="Rhea" id="RHEA:24674"/>
        <dbReference type="ChEBI" id="CHEBI:15378"/>
        <dbReference type="ChEBI" id="CHEBI:17562"/>
        <dbReference type="ChEBI" id="CHEBI:30616"/>
        <dbReference type="ChEBI" id="CHEBI:60377"/>
        <dbReference type="ChEBI" id="CHEBI:456216"/>
        <dbReference type="EC" id="2.7.1.48"/>
    </reaction>
</comment>
<comment type="pathway">
    <text evidence="1">Pyrimidine metabolism; CTP biosynthesis via salvage pathway; CTP from cytidine: step 1/3.</text>
</comment>
<comment type="pathway">
    <text evidence="1">Pyrimidine metabolism; UMP biosynthesis via salvage pathway; UMP from uridine: step 1/1.</text>
</comment>
<comment type="subcellular location">
    <subcellularLocation>
        <location evidence="1">Cytoplasm</location>
    </subcellularLocation>
</comment>
<comment type="similarity">
    <text evidence="1">Belongs to the uridine kinase family.</text>
</comment>
<name>URK_HISS1</name>
<gene>
    <name evidence="1" type="primary">udk</name>
    <name type="ordered locus">HS_0644</name>
</gene>
<reference key="1">
    <citation type="journal article" date="2007" name="J. Bacteriol.">
        <title>Complete genome sequence of Haemophilus somnus (Histophilus somni) strain 129Pt and comparison to Haemophilus ducreyi 35000HP and Haemophilus influenzae Rd.</title>
        <authorList>
            <person name="Challacombe J.F."/>
            <person name="Duncan A.J."/>
            <person name="Brettin T.S."/>
            <person name="Bruce D."/>
            <person name="Chertkov O."/>
            <person name="Detter J.C."/>
            <person name="Han C.S."/>
            <person name="Misra M."/>
            <person name="Richardson P."/>
            <person name="Tapia R."/>
            <person name="Thayer N."/>
            <person name="Xie G."/>
            <person name="Inzana T.J."/>
        </authorList>
    </citation>
    <scope>NUCLEOTIDE SEQUENCE [LARGE SCALE GENOMIC DNA]</scope>
    <source>
        <strain>129Pt</strain>
    </source>
</reference>
<feature type="chain" id="PRO_1000017880" description="Uridine kinase">
    <location>
        <begin position="1"/>
        <end position="213"/>
    </location>
</feature>
<feature type="binding site" evidence="1">
    <location>
        <begin position="13"/>
        <end position="20"/>
    </location>
    <ligand>
        <name>ATP</name>
        <dbReference type="ChEBI" id="CHEBI:30616"/>
    </ligand>
</feature>
<organism>
    <name type="scientific">Histophilus somni (strain 129Pt)</name>
    <name type="common">Haemophilus somnus</name>
    <dbReference type="NCBI Taxonomy" id="205914"/>
    <lineage>
        <taxon>Bacteria</taxon>
        <taxon>Pseudomonadati</taxon>
        <taxon>Pseudomonadota</taxon>
        <taxon>Gammaproteobacteria</taxon>
        <taxon>Pasteurellales</taxon>
        <taxon>Pasteurellaceae</taxon>
        <taxon>Histophilus</taxon>
    </lineage>
</organism>
<accession>Q0I2Y9</accession>
<evidence type="ECO:0000255" key="1">
    <source>
        <dbReference type="HAMAP-Rule" id="MF_00551"/>
    </source>
</evidence>
<proteinExistence type="inferred from homology"/>